<accession>Q8CQF7</accession>
<protein>
    <recommendedName>
        <fullName>Probable copper-transporting P-type ATPase B</fullName>
        <ecNumber>7.2.2.8</ecNumber>
    </recommendedName>
</protein>
<comment type="function">
    <text evidence="1">Involved in copper transport.</text>
</comment>
<comment type="catalytic activity">
    <reaction>
        <text>Cu(+)(in) + ATP + H2O = Cu(+)(out) + ADP + phosphate + H(+)</text>
        <dbReference type="Rhea" id="RHEA:25792"/>
        <dbReference type="ChEBI" id="CHEBI:15377"/>
        <dbReference type="ChEBI" id="CHEBI:15378"/>
        <dbReference type="ChEBI" id="CHEBI:30616"/>
        <dbReference type="ChEBI" id="CHEBI:43474"/>
        <dbReference type="ChEBI" id="CHEBI:49552"/>
        <dbReference type="ChEBI" id="CHEBI:456216"/>
        <dbReference type="EC" id="7.2.2.8"/>
    </reaction>
</comment>
<comment type="subcellular location">
    <subcellularLocation>
        <location evidence="1">Cell membrane</location>
        <topology evidence="1">Multi-pass membrane protein</topology>
    </subcellularLocation>
</comment>
<comment type="similarity">
    <text evidence="4">Belongs to the cation transport ATPase (P-type) (TC 3.A.3) family. Type IB subfamily.</text>
</comment>
<evidence type="ECO:0000250" key="1"/>
<evidence type="ECO:0000255" key="2"/>
<evidence type="ECO:0000256" key="3">
    <source>
        <dbReference type="SAM" id="MobiDB-lite"/>
    </source>
</evidence>
<evidence type="ECO:0000305" key="4"/>
<organism>
    <name type="scientific">Staphylococcus epidermidis (strain ATCC 12228 / FDA PCI 1200)</name>
    <dbReference type="NCBI Taxonomy" id="176280"/>
    <lineage>
        <taxon>Bacteria</taxon>
        <taxon>Bacillati</taxon>
        <taxon>Bacillota</taxon>
        <taxon>Bacilli</taxon>
        <taxon>Bacillales</taxon>
        <taxon>Staphylococcaceae</taxon>
        <taxon>Staphylococcus</taxon>
    </lineage>
</organism>
<keyword id="KW-0067">ATP-binding</keyword>
<keyword id="KW-1003">Cell membrane</keyword>
<keyword id="KW-0186">Copper</keyword>
<keyword id="KW-0187">Copper transport</keyword>
<keyword id="KW-0406">Ion transport</keyword>
<keyword id="KW-0460">Magnesium</keyword>
<keyword id="KW-0472">Membrane</keyword>
<keyword id="KW-0479">Metal-binding</keyword>
<keyword id="KW-0547">Nucleotide-binding</keyword>
<keyword id="KW-0597">Phosphoprotein</keyword>
<keyword id="KW-1278">Translocase</keyword>
<keyword id="KW-0812">Transmembrane</keyword>
<keyword id="KW-1133">Transmembrane helix</keyword>
<keyword id="KW-0813">Transport</keyword>
<gene>
    <name type="primary">copB</name>
    <name type="ordered locus">SE_0126</name>
</gene>
<name>COPB_STAES</name>
<dbReference type="EC" id="7.2.2.8"/>
<dbReference type="EMBL" id="AE015929">
    <property type="protein sequence ID" value="AAO03723.1"/>
    <property type="molecule type" value="Genomic_DNA"/>
</dbReference>
<dbReference type="RefSeq" id="NP_763681.1">
    <property type="nucleotide sequence ID" value="NC_004461.1"/>
</dbReference>
<dbReference type="SMR" id="Q8CQF7"/>
<dbReference type="KEGG" id="sep:SE_0126"/>
<dbReference type="PATRIC" id="fig|176280.10.peg.117"/>
<dbReference type="eggNOG" id="COG2217">
    <property type="taxonomic scope" value="Bacteria"/>
</dbReference>
<dbReference type="HOGENOM" id="CLU_001771_0_3_9"/>
<dbReference type="OrthoDB" id="9813266at2"/>
<dbReference type="Proteomes" id="UP000001411">
    <property type="component" value="Chromosome"/>
</dbReference>
<dbReference type="GO" id="GO:0005886">
    <property type="term" value="C:plasma membrane"/>
    <property type="evidence" value="ECO:0007669"/>
    <property type="project" value="UniProtKB-SubCell"/>
</dbReference>
<dbReference type="GO" id="GO:0005524">
    <property type="term" value="F:ATP binding"/>
    <property type="evidence" value="ECO:0007669"/>
    <property type="project" value="UniProtKB-KW"/>
</dbReference>
<dbReference type="GO" id="GO:0016887">
    <property type="term" value="F:ATP hydrolysis activity"/>
    <property type="evidence" value="ECO:0007669"/>
    <property type="project" value="InterPro"/>
</dbReference>
<dbReference type="GO" id="GO:0005507">
    <property type="term" value="F:copper ion binding"/>
    <property type="evidence" value="ECO:0007669"/>
    <property type="project" value="TreeGrafter"/>
</dbReference>
<dbReference type="GO" id="GO:0043682">
    <property type="term" value="F:P-type divalent copper transporter activity"/>
    <property type="evidence" value="ECO:0007669"/>
    <property type="project" value="TreeGrafter"/>
</dbReference>
<dbReference type="GO" id="GO:0140581">
    <property type="term" value="F:P-type monovalent copper transporter activity"/>
    <property type="evidence" value="ECO:0007669"/>
    <property type="project" value="UniProtKB-EC"/>
</dbReference>
<dbReference type="GO" id="GO:0055070">
    <property type="term" value="P:copper ion homeostasis"/>
    <property type="evidence" value="ECO:0007669"/>
    <property type="project" value="TreeGrafter"/>
</dbReference>
<dbReference type="CDD" id="cd07552">
    <property type="entry name" value="P-type_ATPase_Cu-like"/>
    <property type="match status" value="1"/>
</dbReference>
<dbReference type="FunFam" id="2.70.150.10:FF:000002">
    <property type="entry name" value="Copper-transporting ATPase 1, putative"/>
    <property type="match status" value="1"/>
</dbReference>
<dbReference type="Gene3D" id="3.40.1110.10">
    <property type="entry name" value="Calcium-transporting ATPase, cytoplasmic domain N"/>
    <property type="match status" value="1"/>
</dbReference>
<dbReference type="Gene3D" id="2.70.150.10">
    <property type="entry name" value="Calcium-transporting ATPase, cytoplasmic transduction domain A"/>
    <property type="match status" value="1"/>
</dbReference>
<dbReference type="Gene3D" id="3.40.50.1000">
    <property type="entry name" value="HAD superfamily/HAD-like"/>
    <property type="match status" value="1"/>
</dbReference>
<dbReference type="InterPro" id="IPR023299">
    <property type="entry name" value="ATPase_P-typ_cyto_dom_N"/>
</dbReference>
<dbReference type="InterPro" id="IPR018303">
    <property type="entry name" value="ATPase_P-typ_P_site"/>
</dbReference>
<dbReference type="InterPro" id="IPR023298">
    <property type="entry name" value="ATPase_P-typ_TM_dom_sf"/>
</dbReference>
<dbReference type="InterPro" id="IPR008250">
    <property type="entry name" value="ATPase_P-typ_transduc_dom_A_sf"/>
</dbReference>
<dbReference type="InterPro" id="IPR036412">
    <property type="entry name" value="HAD-like_sf"/>
</dbReference>
<dbReference type="InterPro" id="IPR023214">
    <property type="entry name" value="HAD_sf"/>
</dbReference>
<dbReference type="InterPro" id="IPR027256">
    <property type="entry name" value="P-typ_ATPase_IB"/>
</dbReference>
<dbReference type="InterPro" id="IPR001757">
    <property type="entry name" value="P_typ_ATPase"/>
</dbReference>
<dbReference type="InterPro" id="IPR044492">
    <property type="entry name" value="P_typ_ATPase_HD_dom"/>
</dbReference>
<dbReference type="NCBIfam" id="TIGR01511">
    <property type="entry name" value="ATPase-IB1_Cu"/>
    <property type="match status" value="1"/>
</dbReference>
<dbReference type="NCBIfam" id="TIGR01525">
    <property type="entry name" value="ATPase-IB_hvy"/>
    <property type="match status" value="1"/>
</dbReference>
<dbReference type="NCBIfam" id="TIGR01494">
    <property type="entry name" value="ATPase_P-type"/>
    <property type="match status" value="1"/>
</dbReference>
<dbReference type="PANTHER" id="PTHR43520">
    <property type="entry name" value="ATP7, ISOFORM B"/>
    <property type="match status" value="1"/>
</dbReference>
<dbReference type="PANTHER" id="PTHR43520:SF5">
    <property type="entry name" value="CATION-TRANSPORTING P-TYPE ATPASE-RELATED"/>
    <property type="match status" value="1"/>
</dbReference>
<dbReference type="Pfam" id="PF00122">
    <property type="entry name" value="E1-E2_ATPase"/>
    <property type="match status" value="1"/>
</dbReference>
<dbReference type="Pfam" id="PF00702">
    <property type="entry name" value="Hydrolase"/>
    <property type="match status" value="1"/>
</dbReference>
<dbReference type="PRINTS" id="PR00119">
    <property type="entry name" value="CATATPASE"/>
</dbReference>
<dbReference type="PRINTS" id="PR00120">
    <property type="entry name" value="HATPASE"/>
</dbReference>
<dbReference type="SFLD" id="SFLDG00002">
    <property type="entry name" value="C1.7:_P-type_atpase_like"/>
    <property type="match status" value="1"/>
</dbReference>
<dbReference type="SFLD" id="SFLDF00027">
    <property type="entry name" value="p-type_atpase"/>
    <property type="match status" value="1"/>
</dbReference>
<dbReference type="SUPFAM" id="SSF81653">
    <property type="entry name" value="Calcium ATPase, transduction domain A"/>
    <property type="match status" value="1"/>
</dbReference>
<dbReference type="SUPFAM" id="SSF81665">
    <property type="entry name" value="Calcium ATPase, transmembrane domain M"/>
    <property type="match status" value="1"/>
</dbReference>
<dbReference type="SUPFAM" id="SSF56784">
    <property type="entry name" value="HAD-like"/>
    <property type="match status" value="1"/>
</dbReference>
<dbReference type="PROSITE" id="PS00154">
    <property type="entry name" value="ATPASE_E1_E2"/>
    <property type="match status" value="1"/>
</dbReference>
<reference key="1">
    <citation type="journal article" date="2003" name="Mol. Microbiol.">
        <title>Genome-based analysis of virulence genes in a non-biofilm-forming Staphylococcus epidermidis strain (ATCC 12228).</title>
        <authorList>
            <person name="Zhang Y.-Q."/>
            <person name="Ren S.-X."/>
            <person name="Li H.-L."/>
            <person name="Wang Y.-X."/>
            <person name="Fu G."/>
            <person name="Yang J."/>
            <person name="Qin Z.-Q."/>
            <person name="Miao Y.-G."/>
            <person name="Wang W.-Y."/>
            <person name="Chen R.-S."/>
            <person name="Shen Y."/>
            <person name="Chen Z."/>
            <person name="Yuan Z.-H."/>
            <person name="Zhao G.-P."/>
            <person name="Qu D."/>
            <person name="Danchin A."/>
            <person name="Wen Y.-M."/>
        </authorList>
    </citation>
    <scope>NUCLEOTIDE SEQUENCE [LARGE SCALE GENOMIC DNA]</scope>
    <source>
        <strain>ATCC 12228 / FDA PCI 1200</strain>
    </source>
</reference>
<feature type="chain" id="PRO_0000350606" description="Probable copper-transporting P-type ATPase B">
    <location>
        <begin position="1"/>
        <end position="674"/>
    </location>
</feature>
<feature type="transmembrane region" description="Helical" evidence="2">
    <location>
        <begin position="32"/>
        <end position="52"/>
    </location>
</feature>
<feature type="transmembrane region" description="Helical" evidence="2">
    <location>
        <begin position="57"/>
        <end position="77"/>
    </location>
</feature>
<feature type="transmembrane region" description="Helical" evidence="2">
    <location>
        <begin position="95"/>
        <end position="115"/>
    </location>
</feature>
<feature type="transmembrane region" description="Helical" evidence="2">
    <location>
        <begin position="127"/>
        <end position="147"/>
    </location>
</feature>
<feature type="transmembrane region" description="Helical" evidence="2">
    <location>
        <begin position="284"/>
        <end position="304"/>
    </location>
</feature>
<feature type="transmembrane region" description="Helical" evidence="2">
    <location>
        <begin position="315"/>
        <end position="335"/>
    </location>
</feature>
<feature type="transmembrane region" description="Helical" evidence="2">
    <location>
        <begin position="623"/>
        <end position="645"/>
    </location>
</feature>
<feature type="transmembrane region" description="Helical" evidence="2">
    <location>
        <begin position="649"/>
        <end position="671"/>
    </location>
</feature>
<feature type="region of interest" description="Disordered" evidence="3">
    <location>
        <begin position="1"/>
        <end position="22"/>
    </location>
</feature>
<feature type="compositionally biased region" description="Basic and acidic residues" evidence="3">
    <location>
        <begin position="7"/>
        <end position="16"/>
    </location>
</feature>
<feature type="active site" description="4-aspartylphosphate intermediate" evidence="1">
    <location>
        <position position="367"/>
    </location>
</feature>
<feature type="binding site" evidence="1">
    <location>
        <position position="565"/>
    </location>
    <ligand>
        <name>Mg(2+)</name>
        <dbReference type="ChEBI" id="CHEBI:18420"/>
    </ligand>
</feature>
<feature type="binding site" evidence="1">
    <location>
        <position position="569"/>
    </location>
    <ligand>
        <name>Mg(2+)</name>
        <dbReference type="ChEBI" id="CHEBI:18420"/>
    </ligand>
</feature>
<sequence>MNHSNQMHHDNHESHNHHSGHAHHHGNFKVKFFVSLIFAIPIILLSPLMGINLPFQFTFPGSEWVVLILSTILFFYGGKPFLSGGKDEIATKKPGMMTLVALGISVAYIYSLYAFYMNNFSSATGHTMDFFWELATLILIMLLGHWIEMNAVGNAGDALKKMAELLPNSAIKVMDNGQREEVKISDIMTDDIVEVKAGESIPTDGIIVQGQTSIDESLVTGESKKVQKNQNDNVIGGSINGSGTIQVKVTAVGEDGYLSQVMGLVNQAQNDKSSAELLSDKVAGYLFYFAVIVGVISFIVWMLIQNDVDFALERLVTVLVIACPHALGLAIPLVTARSTSIGAHNGLIIKNRESVEIAQHIDYVMMDKTGTLTEGNFSVNHYESFKNDLSNDTILSLFASLESQSNHPLAISIVDFAKSKNVSFTNPQDVNNIPGVGLEGLIDNKTYKITNVSYLDKHKLNYDDDLFTKLAQQGNSISYLIEDQQVIGMIAQGDQIKESSKQMVADLLSRNITPVMLTGDNNEVAHAVAKELGISDVHAQLMPEDKESIIKDYQSNGNKVMMVGDGINDAPSLIRADIGIAIGAGTDVAVDSGDIILVKSNPSDIVHFLTLSNNTMRKMVQNLWWGAGYNIVAVPLAAGALAFVGLILSPAVGAILMSLSTVIVAINAFTLKLK</sequence>
<proteinExistence type="inferred from homology"/>